<proteinExistence type="inferred from homology"/>
<dbReference type="EC" id="3.1.3.5" evidence="1"/>
<dbReference type="EMBL" id="AE000511">
    <property type="protein sequence ID" value="AAD07975.1"/>
    <property type="molecule type" value="Genomic_DNA"/>
</dbReference>
<dbReference type="PIR" id="B64636">
    <property type="entry name" value="B64636"/>
</dbReference>
<dbReference type="RefSeq" id="NP_207722.1">
    <property type="nucleotide sequence ID" value="NC_000915.1"/>
</dbReference>
<dbReference type="RefSeq" id="WP_000722451.1">
    <property type="nucleotide sequence ID" value="NC_018939.1"/>
</dbReference>
<dbReference type="SMR" id="O25584"/>
<dbReference type="FunCoup" id="O25584">
    <property type="interactions" value="156"/>
</dbReference>
<dbReference type="STRING" id="85962.HP_0930"/>
<dbReference type="PaxDb" id="85962-C694_04785"/>
<dbReference type="EnsemblBacteria" id="AAD07975">
    <property type="protein sequence ID" value="AAD07975"/>
    <property type="gene ID" value="HP_0930"/>
</dbReference>
<dbReference type="KEGG" id="heo:C694_04785"/>
<dbReference type="KEGG" id="hpy:HP_0930"/>
<dbReference type="PATRIC" id="fig|85962.47.peg.995"/>
<dbReference type="eggNOG" id="COG0496">
    <property type="taxonomic scope" value="Bacteria"/>
</dbReference>
<dbReference type="InParanoid" id="O25584"/>
<dbReference type="OrthoDB" id="9780815at2"/>
<dbReference type="PhylomeDB" id="O25584"/>
<dbReference type="Proteomes" id="UP000000429">
    <property type="component" value="Chromosome"/>
</dbReference>
<dbReference type="GO" id="GO:0005737">
    <property type="term" value="C:cytoplasm"/>
    <property type="evidence" value="ECO:0007669"/>
    <property type="project" value="UniProtKB-SubCell"/>
</dbReference>
<dbReference type="GO" id="GO:0008254">
    <property type="term" value="F:3'-nucleotidase activity"/>
    <property type="evidence" value="ECO:0000318"/>
    <property type="project" value="GO_Central"/>
</dbReference>
<dbReference type="GO" id="GO:0008253">
    <property type="term" value="F:5'-nucleotidase activity"/>
    <property type="evidence" value="ECO:0000318"/>
    <property type="project" value="GO_Central"/>
</dbReference>
<dbReference type="GO" id="GO:0004309">
    <property type="term" value="F:exopolyphosphatase activity"/>
    <property type="evidence" value="ECO:0000318"/>
    <property type="project" value="GO_Central"/>
</dbReference>
<dbReference type="GO" id="GO:0046872">
    <property type="term" value="F:metal ion binding"/>
    <property type="evidence" value="ECO:0007669"/>
    <property type="project" value="UniProtKB-UniRule"/>
</dbReference>
<dbReference type="GO" id="GO:0000166">
    <property type="term" value="F:nucleotide binding"/>
    <property type="evidence" value="ECO:0007669"/>
    <property type="project" value="UniProtKB-KW"/>
</dbReference>
<dbReference type="FunFam" id="3.40.1210.10:FF:000001">
    <property type="entry name" value="5'/3'-nucleotidase SurE"/>
    <property type="match status" value="1"/>
</dbReference>
<dbReference type="Gene3D" id="3.40.1210.10">
    <property type="entry name" value="Survival protein SurE-like phosphatase/nucleotidase"/>
    <property type="match status" value="1"/>
</dbReference>
<dbReference type="HAMAP" id="MF_00060">
    <property type="entry name" value="SurE"/>
    <property type="match status" value="1"/>
</dbReference>
<dbReference type="InterPro" id="IPR030048">
    <property type="entry name" value="SurE"/>
</dbReference>
<dbReference type="InterPro" id="IPR002828">
    <property type="entry name" value="SurE-like_Pase/nucleotidase"/>
</dbReference>
<dbReference type="InterPro" id="IPR036523">
    <property type="entry name" value="SurE-like_sf"/>
</dbReference>
<dbReference type="NCBIfam" id="NF001490">
    <property type="entry name" value="PRK00346.1-4"/>
    <property type="match status" value="1"/>
</dbReference>
<dbReference type="NCBIfam" id="NF001494">
    <property type="entry name" value="PRK00346.2-4"/>
    <property type="match status" value="1"/>
</dbReference>
<dbReference type="NCBIfam" id="TIGR00087">
    <property type="entry name" value="surE"/>
    <property type="match status" value="1"/>
</dbReference>
<dbReference type="PANTHER" id="PTHR30457">
    <property type="entry name" value="5'-NUCLEOTIDASE SURE"/>
    <property type="match status" value="1"/>
</dbReference>
<dbReference type="PANTHER" id="PTHR30457:SF12">
    <property type="entry name" value="5'_3'-NUCLEOTIDASE SURE"/>
    <property type="match status" value="1"/>
</dbReference>
<dbReference type="Pfam" id="PF01975">
    <property type="entry name" value="SurE"/>
    <property type="match status" value="1"/>
</dbReference>
<dbReference type="SUPFAM" id="SSF64167">
    <property type="entry name" value="SurE-like"/>
    <property type="match status" value="1"/>
</dbReference>
<organism>
    <name type="scientific">Helicobacter pylori (strain ATCC 700392 / 26695)</name>
    <name type="common">Campylobacter pylori</name>
    <dbReference type="NCBI Taxonomy" id="85962"/>
    <lineage>
        <taxon>Bacteria</taxon>
        <taxon>Pseudomonadati</taxon>
        <taxon>Campylobacterota</taxon>
        <taxon>Epsilonproteobacteria</taxon>
        <taxon>Campylobacterales</taxon>
        <taxon>Helicobacteraceae</taxon>
        <taxon>Helicobacter</taxon>
    </lineage>
</organism>
<feature type="chain" id="PRO_0000111817" description="5'-nucleotidase SurE">
    <location>
        <begin position="1"/>
        <end position="267"/>
    </location>
</feature>
<feature type="binding site" evidence="1">
    <location>
        <position position="9"/>
    </location>
    <ligand>
        <name>a divalent metal cation</name>
        <dbReference type="ChEBI" id="CHEBI:60240"/>
    </ligand>
</feature>
<feature type="binding site" evidence="1">
    <location>
        <position position="10"/>
    </location>
    <ligand>
        <name>a divalent metal cation</name>
        <dbReference type="ChEBI" id="CHEBI:60240"/>
    </ligand>
</feature>
<feature type="binding site" evidence="1">
    <location>
        <position position="40"/>
    </location>
    <ligand>
        <name>a divalent metal cation</name>
        <dbReference type="ChEBI" id="CHEBI:60240"/>
    </ligand>
</feature>
<feature type="binding site" evidence="1">
    <location>
        <position position="97"/>
    </location>
    <ligand>
        <name>a divalent metal cation</name>
        <dbReference type="ChEBI" id="CHEBI:60240"/>
    </ligand>
</feature>
<name>SURE_HELPY</name>
<accession>O25584</accession>
<gene>
    <name evidence="1" type="primary">surE</name>
    <name type="ordered locus">HP_0930</name>
</gene>
<keyword id="KW-0963">Cytoplasm</keyword>
<keyword id="KW-0378">Hydrolase</keyword>
<keyword id="KW-0479">Metal-binding</keyword>
<keyword id="KW-0547">Nucleotide-binding</keyword>
<keyword id="KW-1185">Reference proteome</keyword>
<protein>
    <recommendedName>
        <fullName evidence="1">5'-nucleotidase SurE</fullName>
        <ecNumber evidence="1">3.1.3.5</ecNumber>
    </recommendedName>
    <alternativeName>
        <fullName evidence="1">Nucleoside 5'-monophosphate phosphohydrolase</fullName>
    </alternativeName>
</protein>
<comment type="function">
    <text evidence="1">Nucleotidase that shows phosphatase activity on nucleoside 5'-monophosphates.</text>
</comment>
<comment type="catalytic activity">
    <reaction evidence="1">
        <text>a ribonucleoside 5'-phosphate + H2O = a ribonucleoside + phosphate</text>
        <dbReference type="Rhea" id="RHEA:12484"/>
        <dbReference type="ChEBI" id="CHEBI:15377"/>
        <dbReference type="ChEBI" id="CHEBI:18254"/>
        <dbReference type="ChEBI" id="CHEBI:43474"/>
        <dbReference type="ChEBI" id="CHEBI:58043"/>
        <dbReference type="EC" id="3.1.3.5"/>
    </reaction>
</comment>
<comment type="cofactor">
    <cofactor evidence="1">
        <name>a divalent metal cation</name>
        <dbReference type="ChEBI" id="CHEBI:60240"/>
    </cofactor>
    <text evidence="1">Binds 1 divalent metal cation per subunit.</text>
</comment>
<comment type="subcellular location">
    <subcellularLocation>
        <location evidence="1">Cytoplasm</location>
    </subcellularLocation>
</comment>
<comment type="similarity">
    <text evidence="1">Belongs to the SurE nucleotidase family.</text>
</comment>
<sequence length="267" mass="30024">MKKILLTNDDGYHAKGIKALEQALEEMAEIYVVAPKHEKSACSQCITITAPLRAEKIKGKEGRHYRIDDGTPSDCVYLAINELFKHVCFDLVISGINLGSNMGEDTIYSGTVAGAIEGTIQGVPSIAISQILSNKNKNTPLSFDLAQKIIQDLVQNIFTKGYPLKGRKLLNVNVPNCSLQEYQGERITPKGYRLYKKEVHKRTDPKNESYFWLGLHPLEWQKRENEDRLSDFDAIASNHASITPLNLDLTSYDDLKSLESWHEGMLK</sequence>
<evidence type="ECO:0000255" key="1">
    <source>
        <dbReference type="HAMAP-Rule" id="MF_00060"/>
    </source>
</evidence>
<reference key="1">
    <citation type="journal article" date="1997" name="Nature">
        <title>The complete genome sequence of the gastric pathogen Helicobacter pylori.</title>
        <authorList>
            <person name="Tomb J.-F."/>
            <person name="White O."/>
            <person name="Kerlavage A.R."/>
            <person name="Clayton R.A."/>
            <person name="Sutton G.G."/>
            <person name="Fleischmann R.D."/>
            <person name="Ketchum K.A."/>
            <person name="Klenk H.-P."/>
            <person name="Gill S.R."/>
            <person name="Dougherty B.A."/>
            <person name="Nelson K.E."/>
            <person name="Quackenbush J."/>
            <person name="Zhou L."/>
            <person name="Kirkness E.F."/>
            <person name="Peterson S.N."/>
            <person name="Loftus B.J."/>
            <person name="Richardson D.L."/>
            <person name="Dodson R.J."/>
            <person name="Khalak H.G."/>
            <person name="Glodek A."/>
            <person name="McKenney K."/>
            <person name="FitzGerald L.M."/>
            <person name="Lee N."/>
            <person name="Adams M.D."/>
            <person name="Hickey E.K."/>
            <person name="Berg D.E."/>
            <person name="Gocayne J.D."/>
            <person name="Utterback T.R."/>
            <person name="Peterson J.D."/>
            <person name="Kelley J.M."/>
            <person name="Cotton M.D."/>
            <person name="Weidman J.F."/>
            <person name="Fujii C."/>
            <person name="Bowman C."/>
            <person name="Watthey L."/>
            <person name="Wallin E."/>
            <person name="Hayes W.S."/>
            <person name="Borodovsky M."/>
            <person name="Karp P.D."/>
            <person name="Smith H.O."/>
            <person name="Fraser C.M."/>
            <person name="Venter J.C."/>
        </authorList>
    </citation>
    <scope>NUCLEOTIDE SEQUENCE [LARGE SCALE GENOMIC DNA]</scope>
    <source>
        <strain>ATCC 700392 / 26695</strain>
    </source>
</reference>